<protein>
    <recommendedName>
        <fullName evidence="1">Ribosomal protein L11 methyltransferase</fullName>
        <shortName evidence="1">L11 Mtase</shortName>
        <ecNumber evidence="1">2.1.1.-</ecNumber>
    </recommendedName>
</protein>
<keyword id="KW-0963">Cytoplasm</keyword>
<keyword id="KW-0489">Methyltransferase</keyword>
<keyword id="KW-0949">S-adenosyl-L-methionine</keyword>
<keyword id="KW-0808">Transferase</keyword>
<accession>A8A570</accession>
<proteinExistence type="inferred from homology"/>
<gene>
    <name evidence="1" type="primary">prmA</name>
    <name type="ordered locus">EcHS_A3451</name>
</gene>
<feature type="chain" id="PRO_1000062120" description="Ribosomal protein L11 methyltransferase">
    <location>
        <begin position="1"/>
        <end position="293"/>
    </location>
</feature>
<feature type="binding site" evidence="1">
    <location>
        <position position="145"/>
    </location>
    <ligand>
        <name>S-adenosyl-L-methionine</name>
        <dbReference type="ChEBI" id="CHEBI:59789"/>
    </ligand>
</feature>
<feature type="binding site" evidence="1">
    <location>
        <position position="166"/>
    </location>
    <ligand>
        <name>S-adenosyl-L-methionine</name>
        <dbReference type="ChEBI" id="CHEBI:59789"/>
    </ligand>
</feature>
<feature type="binding site" evidence="1">
    <location>
        <position position="188"/>
    </location>
    <ligand>
        <name>S-adenosyl-L-methionine</name>
        <dbReference type="ChEBI" id="CHEBI:59789"/>
    </ligand>
</feature>
<feature type="binding site" evidence="1">
    <location>
        <position position="230"/>
    </location>
    <ligand>
        <name>S-adenosyl-L-methionine</name>
        <dbReference type="ChEBI" id="CHEBI:59789"/>
    </ligand>
</feature>
<dbReference type="EC" id="2.1.1.-" evidence="1"/>
<dbReference type="EMBL" id="CP000802">
    <property type="protein sequence ID" value="ABV07674.1"/>
    <property type="molecule type" value="Genomic_DNA"/>
</dbReference>
<dbReference type="RefSeq" id="WP_001145827.1">
    <property type="nucleotide sequence ID" value="NC_009800.1"/>
</dbReference>
<dbReference type="SMR" id="A8A570"/>
<dbReference type="GeneID" id="75206107"/>
<dbReference type="KEGG" id="ecx:EcHS_A3451"/>
<dbReference type="HOGENOM" id="CLU_049382_4_1_6"/>
<dbReference type="GO" id="GO:0005829">
    <property type="term" value="C:cytosol"/>
    <property type="evidence" value="ECO:0007669"/>
    <property type="project" value="TreeGrafter"/>
</dbReference>
<dbReference type="GO" id="GO:0016279">
    <property type="term" value="F:protein-lysine N-methyltransferase activity"/>
    <property type="evidence" value="ECO:0007669"/>
    <property type="project" value="TreeGrafter"/>
</dbReference>
<dbReference type="GO" id="GO:0032259">
    <property type="term" value="P:methylation"/>
    <property type="evidence" value="ECO:0007669"/>
    <property type="project" value="UniProtKB-KW"/>
</dbReference>
<dbReference type="CDD" id="cd02440">
    <property type="entry name" value="AdoMet_MTases"/>
    <property type="match status" value="1"/>
</dbReference>
<dbReference type="FunFam" id="3.40.50.150:FF:000021">
    <property type="entry name" value="Ribosomal protein L11 methyltransferase"/>
    <property type="match status" value="1"/>
</dbReference>
<dbReference type="Gene3D" id="3.40.50.150">
    <property type="entry name" value="Vaccinia Virus protein VP39"/>
    <property type="match status" value="1"/>
</dbReference>
<dbReference type="HAMAP" id="MF_00735">
    <property type="entry name" value="Methyltr_PrmA"/>
    <property type="match status" value="1"/>
</dbReference>
<dbReference type="InterPro" id="IPR050078">
    <property type="entry name" value="Ribosomal_L11_MeTrfase_PrmA"/>
</dbReference>
<dbReference type="InterPro" id="IPR004498">
    <property type="entry name" value="Ribosomal_PrmA_MeTrfase"/>
</dbReference>
<dbReference type="InterPro" id="IPR029063">
    <property type="entry name" value="SAM-dependent_MTases_sf"/>
</dbReference>
<dbReference type="NCBIfam" id="TIGR00406">
    <property type="entry name" value="prmA"/>
    <property type="match status" value="1"/>
</dbReference>
<dbReference type="PANTHER" id="PTHR43648">
    <property type="entry name" value="ELECTRON TRANSFER FLAVOPROTEIN BETA SUBUNIT LYSINE METHYLTRANSFERASE"/>
    <property type="match status" value="1"/>
</dbReference>
<dbReference type="PANTHER" id="PTHR43648:SF1">
    <property type="entry name" value="ELECTRON TRANSFER FLAVOPROTEIN BETA SUBUNIT LYSINE METHYLTRANSFERASE"/>
    <property type="match status" value="1"/>
</dbReference>
<dbReference type="Pfam" id="PF06325">
    <property type="entry name" value="PrmA"/>
    <property type="match status" value="1"/>
</dbReference>
<dbReference type="PIRSF" id="PIRSF000401">
    <property type="entry name" value="RPL11_MTase"/>
    <property type="match status" value="1"/>
</dbReference>
<dbReference type="SUPFAM" id="SSF53335">
    <property type="entry name" value="S-adenosyl-L-methionine-dependent methyltransferases"/>
    <property type="match status" value="1"/>
</dbReference>
<sequence>MPWIQLKLNTTGANAEDLSDALMEAGAVSITFQDTHDTPVFEPLPGETRLWGDTDVIGLFDAETDMNDVVAILENHPLLGAGFAHKIEQLEDKDWEREWMDNFHPMRFGERLWICPSWRDVPDENAVNVMLDPGLAFGTGTHPTTSLCLQWLDSLDLTGKTVIDFGCGSGILAIAALKLGAAKAIGIDIDPQAIQASRDNAERNGVSDRLELYLPKDQPEEMKADVVVANILAGPLRELAPLISVLPVSGGLLGLSGILASQAESVCEAYADSFALDPVVEKEEWCRITGRKN</sequence>
<organism>
    <name type="scientific">Escherichia coli O9:H4 (strain HS)</name>
    <dbReference type="NCBI Taxonomy" id="331112"/>
    <lineage>
        <taxon>Bacteria</taxon>
        <taxon>Pseudomonadati</taxon>
        <taxon>Pseudomonadota</taxon>
        <taxon>Gammaproteobacteria</taxon>
        <taxon>Enterobacterales</taxon>
        <taxon>Enterobacteriaceae</taxon>
        <taxon>Escherichia</taxon>
    </lineage>
</organism>
<name>PRMA_ECOHS</name>
<evidence type="ECO:0000255" key="1">
    <source>
        <dbReference type="HAMAP-Rule" id="MF_00735"/>
    </source>
</evidence>
<reference key="1">
    <citation type="journal article" date="2008" name="J. Bacteriol.">
        <title>The pangenome structure of Escherichia coli: comparative genomic analysis of E. coli commensal and pathogenic isolates.</title>
        <authorList>
            <person name="Rasko D.A."/>
            <person name="Rosovitz M.J."/>
            <person name="Myers G.S.A."/>
            <person name="Mongodin E.F."/>
            <person name="Fricke W.F."/>
            <person name="Gajer P."/>
            <person name="Crabtree J."/>
            <person name="Sebaihia M."/>
            <person name="Thomson N.R."/>
            <person name="Chaudhuri R."/>
            <person name="Henderson I.R."/>
            <person name="Sperandio V."/>
            <person name="Ravel J."/>
        </authorList>
    </citation>
    <scope>NUCLEOTIDE SEQUENCE [LARGE SCALE GENOMIC DNA]</scope>
    <source>
        <strain>HS</strain>
    </source>
</reference>
<comment type="function">
    <text evidence="1">Methylates ribosomal protein L11.</text>
</comment>
<comment type="catalytic activity">
    <reaction evidence="1">
        <text>L-lysyl-[protein] + 3 S-adenosyl-L-methionine = N(6),N(6),N(6)-trimethyl-L-lysyl-[protein] + 3 S-adenosyl-L-homocysteine + 3 H(+)</text>
        <dbReference type="Rhea" id="RHEA:54192"/>
        <dbReference type="Rhea" id="RHEA-COMP:9752"/>
        <dbReference type="Rhea" id="RHEA-COMP:13826"/>
        <dbReference type="ChEBI" id="CHEBI:15378"/>
        <dbReference type="ChEBI" id="CHEBI:29969"/>
        <dbReference type="ChEBI" id="CHEBI:57856"/>
        <dbReference type="ChEBI" id="CHEBI:59789"/>
        <dbReference type="ChEBI" id="CHEBI:61961"/>
    </reaction>
</comment>
<comment type="subcellular location">
    <subcellularLocation>
        <location evidence="1">Cytoplasm</location>
    </subcellularLocation>
</comment>
<comment type="similarity">
    <text evidence="1">Belongs to the methyltransferase superfamily. PrmA family.</text>
</comment>